<feature type="initiator methionine" description="Removed" evidence="1">
    <location>
        <position position="1"/>
    </location>
</feature>
<feature type="chain" id="PRO_0000084905" description="Catalase">
    <location>
        <begin position="2"/>
        <end position="527"/>
    </location>
</feature>
<feature type="region of interest" description="Disordered" evidence="4">
    <location>
        <begin position="1"/>
        <end position="34"/>
    </location>
</feature>
<feature type="short sequence motif" description="Microbody targeting signal; atypical" evidence="1">
    <location>
        <begin position="524"/>
        <end position="527"/>
    </location>
</feature>
<feature type="compositionally biased region" description="Basic and acidic residues" evidence="4">
    <location>
        <begin position="1"/>
        <end position="22"/>
    </location>
</feature>
<feature type="active site" evidence="3">
    <location>
        <position position="75"/>
    </location>
</feature>
<feature type="active site" evidence="3">
    <location>
        <position position="148"/>
    </location>
</feature>
<feature type="binding site" evidence="1">
    <location>
        <position position="194"/>
    </location>
    <ligand>
        <name>NADP(+)</name>
        <dbReference type="ChEBI" id="CHEBI:58349"/>
    </ligand>
</feature>
<feature type="binding site" evidence="1">
    <location>
        <position position="201"/>
    </location>
    <ligand>
        <name>NADP(+)</name>
        <dbReference type="ChEBI" id="CHEBI:58349"/>
    </ligand>
</feature>
<feature type="binding site" evidence="1">
    <location>
        <position position="203"/>
    </location>
    <ligand>
        <name>NADP(+)</name>
        <dbReference type="ChEBI" id="CHEBI:58349"/>
    </ligand>
</feature>
<feature type="binding site" evidence="1">
    <location>
        <position position="213"/>
    </location>
    <ligand>
        <name>NADP(+)</name>
        <dbReference type="ChEBI" id="CHEBI:58349"/>
    </ligand>
</feature>
<feature type="binding site" evidence="1">
    <location>
        <position position="237"/>
    </location>
    <ligand>
        <name>NADP(+)</name>
        <dbReference type="ChEBI" id="CHEBI:58349"/>
    </ligand>
</feature>
<feature type="binding site" evidence="1">
    <location>
        <position position="303"/>
    </location>
    <ligand>
        <name>NADP(+)</name>
        <dbReference type="ChEBI" id="CHEBI:58349"/>
    </ligand>
</feature>
<feature type="binding site" evidence="1">
    <location>
        <position position="305"/>
    </location>
    <ligand>
        <name>NADP(+)</name>
        <dbReference type="ChEBI" id="CHEBI:58349"/>
    </ligand>
</feature>
<feature type="binding site" evidence="1">
    <location>
        <position position="306"/>
    </location>
    <ligand>
        <name>NADP(+)</name>
        <dbReference type="ChEBI" id="CHEBI:58349"/>
    </ligand>
</feature>
<feature type="binding site" description="axial binding residue" evidence="1">
    <location>
        <position position="358"/>
    </location>
    <ligand>
        <name>heme</name>
        <dbReference type="ChEBI" id="CHEBI:30413"/>
    </ligand>
    <ligandPart>
        <name>Fe</name>
        <dbReference type="ChEBI" id="CHEBI:18248"/>
    </ligandPart>
</feature>
<feature type="modified residue" description="N-acetylalanine" evidence="1">
    <location>
        <position position="2"/>
    </location>
</feature>
<feature type="modified residue" description="Phosphoserine" evidence="1">
    <location>
        <position position="9"/>
    </location>
</feature>
<feature type="modified residue" description="N6-succinyllysine" evidence="2">
    <location>
        <position position="13"/>
    </location>
</feature>
<feature type="modified residue" description="N6-succinyllysine" evidence="2">
    <location>
        <position position="221"/>
    </location>
</feature>
<feature type="modified residue" description="N6-acetyllysine" evidence="2">
    <location>
        <position position="233"/>
    </location>
</feature>
<feature type="modified residue" description="N6-acetyllysine; alternate" evidence="2">
    <location>
        <position position="306"/>
    </location>
</feature>
<feature type="modified residue" description="N6-succinyllysine; alternate" evidence="2">
    <location>
        <position position="306"/>
    </location>
</feature>
<feature type="modified residue" description="Phosphoserine" evidence="2">
    <location>
        <position position="417"/>
    </location>
</feature>
<feature type="modified residue" description="Phosphoserine" evidence="7">
    <location>
        <position position="434"/>
    </location>
</feature>
<feature type="modified residue" description="N6-acetyllysine; alternate" evidence="2">
    <location>
        <position position="449"/>
    </location>
</feature>
<feature type="modified residue" description="N6-succinyllysine; alternate" evidence="2">
    <location>
        <position position="449"/>
    </location>
</feature>
<feature type="modified residue" description="N6-acetyllysine; alternate" evidence="2">
    <location>
        <position position="480"/>
    </location>
</feature>
<feature type="modified residue" description="N6-succinyllysine; alternate" evidence="2">
    <location>
        <position position="480"/>
    </location>
</feature>
<feature type="modified residue" description="Phosphothreonine" evidence="1">
    <location>
        <position position="511"/>
    </location>
</feature>
<feature type="modified residue" description="Phosphoserine" evidence="7">
    <location>
        <position position="517"/>
    </location>
</feature>
<feature type="modified residue" description="N6-succinyllysine" evidence="2">
    <location>
        <position position="522"/>
    </location>
</feature>
<feature type="sequence conflict" description="In Ref. 4; AAA40885." evidence="6" ref="4">
    <original>S</original>
    <variation>N</variation>
    <location>
        <position position="434"/>
    </location>
</feature>
<proteinExistence type="evidence at protein level"/>
<sequence>MADSRDPASDQMKQWKEQRAPQKPDVLTTGGGNPIGDKLNIMTAGPRGPLLVQDVVFTDEMAHFDRERIPERVVHAKGAGAFGYFEVTHDITRYSKAKVFEHIGKRTPIAVRFSTVAGESGSADTVRDPRGFAVKFYTEDGNWDLVGNNTPIFFIRDAMLFPSFIHSQKRNPQTHLKDPDMVWDFWSLCPESLHQVTFLFSDRGIPDGHRHMNGYGSHTFKLVNANGEAVYCKFHYKTDQGIKNLPVEEAGRLAQEDPDYGLRDLFNAIASGNYPSWTFYIQVMTFKEAETFPFNPFDLTKVWPHKDYPLIPVGKLVLNRNPANYFAEVEQMAFDPSNMPPGIEPSPDKMLQGRLFAYPDTHRHRLGPNYLQIPVNCPYRARVANYQRDGPMCMHDNQGGAPNYYPNSFSAPEQQGSALEHHSQCSADVKRFNSANEDNVTQVRTFYTKVLNEEERKRLCENIANHLKDAQLFIQRKAVKNFTDVHPDYGARVQALLDQYNSQKPKNAIHTYVQAGSHIAAKGKANL</sequence>
<accession>P04762</accession>
<protein>
    <recommendedName>
        <fullName>Catalase</fullName>
        <ecNumber evidence="3">1.11.1.6</ecNumber>
    </recommendedName>
</protein>
<comment type="function">
    <text evidence="1">Catalyzes the degradation of hydrogen peroxide (H(2)O(2)) generated by peroxisomal oxidases to water and oxygen, thereby protecting cells from the toxic effects of hydrogen peroxide. Promotes growth of cells including T-cells, B-cells, myeloid leukemia cells, melanoma cells, mastocytoma cells and normal and transformed fibroblast cells.</text>
</comment>
<comment type="catalytic activity">
    <reaction evidence="3">
        <text>2 H2O2 = O2 + 2 H2O</text>
        <dbReference type="Rhea" id="RHEA:20309"/>
        <dbReference type="ChEBI" id="CHEBI:15377"/>
        <dbReference type="ChEBI" id="CHEBI:15379"/>
        <dbReference type="ChEBI" id="CHEBI:16240"/>
        <dbReference type="EC" id="1.11.1.6"/>
    </reaction>
</comment>
<comment type="cofactor">
    <cofactor evidence="1">
        <name>heme</name>
        <dbReference type="ChEBI" id="CHEBI:30413"/>
    </cofactor>
</comment>
<comment type="cofactor">
    <cofactor evidence="1">
        <name>NADP(+)</name>
        <dbReference type="ChEBI" id="CHEBI:58349"/>
    </cofactor>
</comment>
<comment type="subunit">
    <text evidence="1">Homotetramer. Interacts (via microbody targeting signal) with PEX5, monomeric form interacts with PEX5, leading to its translocation into peroxisomes.</text>
</comment>
<comment type="subcellular location">
    <subcellularLocation>
        <location evidence="5">Peroxisome matrix</location>
    </subcellularLocation>
</comment>
<comment type="tissue specificity">
    <text evidence="5">Expressed in renal proximal tubules (at protein level).</text>
</comment>
<comment type="similarity">
    <text evidence="6">Belongs to the catalase family.</text>
</comment>
<keyword id="KW-0007">Acetylation</keyword>
<keyword id="KW-0903">Direct protein sequencing</keyword>
<keyword id="KW-0349">Heme</keyword>
<keyword id="KW-0376">Hydrogen peroxide</keyword>
<keyword id="KW-0408">Iron</keyword>
<keyword id="KW-0479">Metal-binding</keyword>
<keyword id="KW-0497">Mitogen</keyword>
<keyword id="KW-0521">NADP</keyword>
<keyword id="KW-0560">Oxidoreductase</keyword>
<keyword id="KW-0575">Peroxidase</keyword>
<keyword id="KW-0576">Peroxisome</keyword>
<keyword id="KW-0597">Phosphoprotein</keyword>
<keyword id="KW-1185">Reference proteome</keyword>
<gene>
    <name type="primary">Cat</name>
    <name type="synonym">Cas1</name>
</gene>
<evidence type="ECO:0000250" key="1">
    <source>
        <dbReference type="UniProtKB" id="P04040"/>
    </source>
</evidence>
<evidence type="ECO:0000250" key="2">
    <source>
        <dbReference type="UniProtKB" id="P24270"/>
    </source>
</evidence>
<evidence type="ECO:0000255" key="3">
    <source>
        <dbReference type="PROSITE-ProRule" id="PRU10013"/>
    </source>
</evidence>
<evidence type="ECO:0000256" key="4">
    <source>
        <dbReference type="SAM" id="MobiDB-lite"/>
    </source>
</evidence>
<evidence type="ECO:0000269" key="5">
    <source>
    </source>
</evidence>
<evidence type="ECO:0000305" key="6"/>
<evidence type="ECO:0007744" key="7">
    <source>
    </source>
</evidence>
<dbReference type="EC" id="1.11.1.6" evidence="3"/>
<dbReference type="EMBL" id="M11670">
    <property type="protein sequence ID" value="AAA40884.1"/>
    <property type="molecule type" value="mRNA"/>
</dbReference>
<dbReference type="EMBL" id="M25680">
    <property type="protein sequence ID" value="AAB42378.1"/>
    <property type="molecule type" value="Genomic_DNA"/>
</dbReference>
<dbReference type="EMBL" id="M25669">
    <property type="protein sequence ID" value="AAB42378.1"/>
    <property type="status" value="JOINED"/>
    <property type="molecule type" value="Genomic_DNA"/>
</dbReference>
<dbReference type="EMBL" id="M25670">
    <property type="protein sequence ID" value="AAB42378.1"/>
    <property type="status" value="JOINED"/>
    <property type="molecule type" value="Genomic_DNA"/>
</dbReference>
<dbReference type="EMBL" id="M25671">
    <property type="protein sequence ID" value="AAB42378.1"/>
    <property type="status" value="JOINED"/>
    <property type="molecule type" value="Genomic_DNA"/>
</dbReference>
<dbReference type="EMBL" id="M25672">
    <property type="protein sequence ID" value="AAB42378.1"/>
    <property type="status" value="JOINED"/>
    <property type="molecule type" value="Genomic_DNA"/>
</dbReference>
<dbReference type="EMBL" id="M25673">
    <property type="protein sequence ID" value="AAB42378.1"/>
    <property type="status" value="JOINED"/>
    <property type="molecule type" value="Genomic_DNA"/>
</dbReference>
<dbReference type="EMBL" id="M25674">
    <property type="protein sequence ID" value="AAB42378.1"/>
    <property type="status" value="JOINED"/>
    <property type="molecule type" value="Genomic_DNA"/>
</dbReference>
<dbReference type="EMBL" id="M25675">
    <property type="protein sequence ID" value="AAB42378.1"/>
    <property type="status" value="JOINED"/>
    <property type="molecule type" value="Genomic_DNA"/>
</dbReference>
<dbReference type="EMBL" id="M25676">
    <property type="protein sequence ID" value="AAB42378.1"/>
    <property type="status" value="JOINED"/>
    <property type="molecule type" value="Genomic_DNA"/>
</dbReference>
<dbReference type="EMBL" id="M25677">
    <property type="protein sequence ID" value="AAB42378.1"/>
    <property type="status" value="JOINED"/>
    <property type="molecule type" value="Genomic_DNA"/>
</dbReference>
<dbReference type="EMBL" id="M25678">
    <property type="protein sequence ID" value="AAB42378.1"/>
    <property type="status" value="JOINED"/>
    <property type="molecule type" value="Genomic_DNA"/>
</dbReference>
<dbReference type="EMBL" id="M25679">
    <property type="protein sequence ID" value="AAB42378.1"/>
    <property type="status" value="JOINED"/>
    <property type="molecule type" value="Genomic_DNA"/>
</dbReference>
<dbReference type="EMBL" id="BC081853">
    <property type="protein sequence ID" value="AAH81853.1"/>
    <property type="molecule type" value="mRNA"/>
</dbReference>
<dbReference type="EMBL" id="K01929">
    <property type="protein sequence ID" value="AAA40885.1"/>
    <property type="molecule type" value="mRNA"/>
</dbReference>
<dbReference type="PIR" id="JU0065">
    <property type="entry name" value="CSRT"/>
</dbReference>
<dbReference type="RefSeq" id="NP_036652.1">
    <property type="nucleotide sequence ID" value="NM_012520.2"/>
</dbReference>
<dbReference type="SMR" id="P04762"/>
<dbReference type="BioGRID" id="246433">
    <property type="interactions" value="5"/>
</dbReference>
<dbReference type="FunCoup" id="P04762">
    <property type="interactions" value="1535"/>
</dbReference>
<dbReference type="IntAct" id="P04762">
    <property type="interactions" value="3"/>
</dbReference>
<dbReference type="STRING" id="10116.ENSRNOP00000011230"/>
<dbReference type="BindingDB" id="P04762"/>
<dbReference type="ChEMBL" id="CHEMBL1075216"/>
<dbReference type="PeroxiBase" id="11811">
    <property type="entry name" value="RnoKat"/>
</dbReference>
<dbReference type="CarbonylDB" id="P04762"/>
<dbReference type="GlyGen" id="P04762">
    <property type="glycosylation" value="1 site, 1 O-linked glycan (1 site)"/>
</dbReference>
<dbReference type="iPTMnet" id="P04762"/>
<dbReference type="PhosphoSitePlus" id="P04762"/>
<dbReference type="SwissPalm" id="P04762"/>
<dbReference type="jPOST" id="P04762"/>
<dbReference type="PaxDb" id="10116-ENSRNOP00000011230"/>
<dbReference type="Ensembl" id="ENSRNOT00000011230.6">
    <property type="protein sequence ID" value="ENSRNOP00000011230.4"/>
    <property type="gene ID" value="ENSRNOG00000008364.7"/>
</dbReference>
<dbReference type="GeneID" id="24248"/>
<dbReference type="KEGG" id="rno:24248"/>
<dbReference type="UCSC" id="RGD:2279">
    <property type="organism name" value="rat"/>
</dbReference>
<dbReference type="AGR" id="RGD:2279"/>
<dbReference type="CTD" id="847"/>
<dbReference type="RGD" id="2279">
    <property type="gene designation" value="Cat"/>
</dbReference>
<dbReference type="eggNOG" id="KOG0047">
    <property type="taxonomic scope" value="Eukaryota"/>
</dbReference>
<dbReference type="GeneTree" id="ENSGT00390000018100"/>
<dbReference type="HOGENOM" id="CLU_010645_2_0_1"/>
<dbReference type="InParanoid" id="P04762"/>
<dbReference type="OMA" id="KFRWNVF"/>
<dbReference type="OrthoDB" id="6880011at2759"/>
<dbReference type="PhylomeDB" id="P04762"/>
<dbReference type="TreeFam" id="TF300540"/>
<dbReference type="BRENDA" id="1.11.1.6">
    <property type="organism ID" value="5301"/>
</dbReference>
<dbReference type="Reactome" id="R-RNO-3299685">
    <property type="pathway name" value="Detoxification of Reactive Oxygen Species"/>
</dbReference>
<dbReference type="Reactome" id="R-RNO-6798695">
    <property type="pathway name" value="Neutrophil degranulation"/>
</dbReference>
<dbReference type="Reactome" id="R-RNO-9033241">
    <property type="pathway name" value="Peroxisomal protein import"/>
</dbReference>
<dbReference type="PRO" id="PR:P04762"/>
<dbReference type="Proteomes" id="UP000002494">
    <property type="component" value="Chromosome 3"/>
</dbReference>
<dbReference type="Bgee" id="ENSRNOG00000008364">
    <property type="expression patterns" value="Expressed in liver and 19 other cell types or tissues"/>
</dbReference>
<dbReference type="GO" id="GO:0062151">
    <property type="term" value="C:catalase complex"/>
    <property type="evidence" value="ECO:0000266"/>
    <property type="project" value="RGD"/>
</dbReference>
<dbReference type="GO" id="GO:0005737">
    <property type="term" value="C:cytoplasm"/>
    <property type="evidence" value="ECO:0000318"/>
    <property type="project" value="GO_Central"/>
</dbReference>
<dbReference type="GO" id="GO:0005615">
    <property type="term" value="C:extracellular space"/>
    <property type="evidence" value="ECO:0000314"/>
    <property type="project" value="RGD"/>
</dbReference>
<dbReference type="GO" id="GO:0005739">
    <property type="term" value="C:mitochondrion"/>
    <property type="evidence" value="ECO:0000318"/>
    <property type="project" value="GO_Central"/>
</dbReference>
<dbReference type="GO" id="GO:0005782">
    <property type="term" value="C:peroxisomal matrix"/>
    <property type="evidence" value="ECO:0000314"/>
    <property type="project" value="UniProtKB"/>
</dbReference>
<dbReference type="GO" id="GO:0005778">
    <property type="term" value="C:peroxisomal membrane"/>
    <property type="evidence" value="ECO:0000266"/>
    <property type="project" value="RGD"/>
</dbReference>
<dbReference type="GO" id="GO:0005777">
    <property type="term" value="C:peroxisome"/>
    <property type="evidence" value="ECO:0000314"/>
    <property type="project" value="HGNC-UCL"/>
</dbReference>
<dbReference type="GO" id="GO:0032991">
    <property type="term" value="C:protein-containing complex"/>
    <property type="evidence" value="ECO:0000266"/>
    <property type="project" value="RGD"/>
</dbReference>
<dbReference type="GO" id="GO:0004046">
    <property type="term" value="F:aminoacylase activity"/>
    <property type="evidence" value="ECO:0000266"/>
    <property type="project" value="RGD"/>
</dbReference>
<dbReference type="GO" id="GO:0016209">
    <property type="term" value="F:antioxidant activity"/>
    <property type="evidence" value="ECO:0000266"/>
    <property type="project" value="RGD"/>
</dbReference>
<dbReference type="GO" id="GO:0004096">
    <property type="term" value="F:catalase activity"/>
    <property type="evidence" value="ECO:0000314"/>
    <property type="project" value="RGD"/>
</dbReference>
<dbReference type="GO" id="GO:0019899">
    <property type="term" value="F:enzyme binding"/>
    <property type="evidence" value="ECO:0000266"/>
    <property type="project" value="RGD"/>
</dbReference>
<dbReference type="GO" id="GO:0020037">
    <property type="term" value="F:heme binding"/>
    <property type="evidence" value="ECO:0000266"/>
    <property type="project" value="RGD"/>
</dbReference>
<dbReference type="GO" id="GO:0042802">
    <property type="term" value="F:identical protein binding"/>
    <property type="evidence" value="ECO:0000266"/>
    <property type="project" value="RGD"/>
</dbReference>
<dbReference type="GO" id="GO:0046872">
    <property type="term" value="F:metal ion binding"/>
    <property type="evidence" value="ECO:0007669"/>
    <property type="project" value="UniProtKB-KW"/>
</dbReference>
<dbReference type="GO" id="GO:0050661">
    <property type="term" value="F:NADP binding"/>
    <property type="evidence" value="ECO:0000266"/>
    <property type="project" value="RGD"/>
</dbReference>
<dbReference type="GO" id="GO:0016684">
    <property type="term" value="F:oxidoreductase activity, acting on peroxide as acceptor"/>
    <property type="evidence" value="ECO:0000266"/>
    <property type="project" value="RGD"/>
</dbReference>
<dbReference type="GO" id="GO:0042803">
    <property type="term" value="F:protein homodimerization activity"/>
    <property type="evidence" value="ECO:0000266"/>
    <property type="project" value="RGD"/>
</dbReference>
<dbReference type="GO" id="GO:0009060">
    <property type="term" value="P:aerobic respiration"/>
    <property type="evidence" value="ECO:0000266"/>
    <property type="project" value="RGD"/>
</dbReference>
<dbReference type="GO" id="GO:0061692">
    <property type="term" value="P:cellular detoxification of hydrogen peroxide"/>
    <property type="evidence" value="ECO:0000266"/>
    <property type="project" value="RGD"/>
</dbReference>
<dbReference type="GO" id="GO:0071363">
    <property type="term" value="P:cellular response to growth factor stimulus"/>
    <property type="evidence" value="ECO:0000270"/>
    <property type="project" value="RGD"/>
</dbReference>
<dbReference type="GO" id="GO:0008203">
    <property type="term" value="P:cholesterol metabolic process"/>
    <property type="evidence" value="ECO:0000266"/>
    <property type="project" value="RGD"/>
</dbReference>
<dbReference type="GO" id="GO:0020027">
    <property type="term" value="P:hemoglobin metabolic process"/>
    <property type="evidence" value="ECO:0000266"/>
    <property type="project" value="RGD"/>
</dbReference>
<dbReference type="GO" id="GO:0042744">
    <property type="term" value="P:hydrogen peroxide catabolic process"/>
    <property type="evidence" value="ECO:0000314"/>
    <property type="project" value="RGD"/>
</dbReference>
<dbReference type="GO" id="GO:0001822">
    <property type="term" value="P:kidney development"/>
    <property type="evidence" value="ECO:0000315"/>
    <property type="project" value="RGD"/>
</dbReference>
<dbReference type="GO" id="GO:0043066">
    <property type="term" value="P:negative regulation of apoptotic process"/>
    <property type="evidence" value="ECO:0000315"/>
    <property type="project" value="RGD"/>
</dbReference>
<dbReference type="GO" id="GO:0051781">
    <property type="term" value="P:positive regulation of cell division"/>
    <property type="evidence" value="ECO:0007669"/>
    <property type="project" value="UniProtKB-KW"/>
</dbReference>
<dbReference type="GO" id="GO:0051897">
    <property type="term" value="P:positive regulation of phosphatidylinositol 3-kinase/protein kinase B signal transduction"/>
    <property type="evidence" value="ECO:0000266"/>
    <property type="project" value="RGD"/>
</dbReference>
<dbReference type="GO" id="GO:0014823">
    <property type="term" value="P:response to activity"/>
    <property type="evidence" value="ECO:0000270"/>
    <property type="project" value="RGD"/>
</dbReference>
<dbReference type="GO" id="GO:0072722">
    <property type="term" value="P:response to amitrole"/>
    <property type="evidence" value="ECO:0000270"/>
    <property type="project" value="RGD"/>
</dbReference>
<dbReference type="GO" id="GO:0046686">
    <property type="term" value="P:response to cadmium ion"/>
    <property type="evidence" value="ECO:0000270"/>
    <property type="project" value="RGD"/>
</dbReference>
<dbReference type="GO" id="GO:0032355">
    <property type="term" value="P:response to estradiol"/>
    <property type="evidence" value="ECO:0000270"/>
    <property type="project" value="RGD"/>
</dbReference>
<dbReference type="GO" id="GO:0045471">
    <property type="term" value="P:response to ethanol"/>
    <property type="evidence" value="ECO:0000270"/>
    <property type="project" value="RGD"/>
</dbReference>
<dbReference type="GO" id="GO:0070542">
    <property type="term" value="P:response to fatty acid"/>
    <property type="evidence" value="ECO:0000270"/>
    <property type="project" value="RGD"/>
</dbReference>
<dbReference type="GO" id="GO:0042542">
    <property type="term" value="P:response to hydrogen peroxide"/>
    <property type="evidence" value="ECO:0000318"/>
    <property type="project" value="GO_Central"/>
</dbReference>
<dbReference type="GO" id="GO:0055093">
    <property type="term" value="P:response to hyperoxia"/>
    <property type="evidence" value="ECO:0000270"/>
    <property type="project" value="RGD"/>
</dbReference>
<dbReference type="GO" id="GO:0001666">
    <property type="term" value="P:response to hypoxia"/>
    <property type="evidence" value="ECO:0000315"/>
    <property type="project" value="RGD"/>
</dbReference>
<dbReference type="GO" id="GO:0014854">
    <property type="term" value="P:response to inactivity"/>
    <property type="evidence" value="ECO:0000270"/>
    <property type="project" value="RGD"/>
</dbReference>
<dbReference type="GO" id="GO:0032868">
    <property type="term" value="P:response to insulin"/>
    <property type="evidence" value="ECO:0000270"/>
    <property type="project" value="RGD"/>
</dbReference>
<dbReference type="GO" id="GO:0033591">
    <property type="term" value="P:response to L-ascorbic acid"/>
    <property type="evidence" value="ECO:0000270"/>
    <property type="project" value="RGD"/>
</dbReference>
<dbReference type="GO" id="GO:0010288">
    <property type="term" value="P:response to lead ion"/>
    <property type="evidence" value="ECO:0000270"/>
    <property type="project" value="RGD"/>
</dbReference>
<dbReference type="GO" id="GO:0009642">
    <property type="term" value="P:response to light intensity"/>
    <property type="evidence" value="ECO:0000270"/>
    <property type="project" value="RGD"/>
</dbReference>
<dbReference type="GO" id="GO:0006979">
    <property type="term" value="P:response to oxidative stress"/>
    <property type="evidence" value="ECO:0000314"/>
    <property type="project" value="RGD"/>
</dbReference>
<dbReference type="GO" id="GO:0010193">
    <property type="term" value="P:response to ozone"/>
    <property type="evidence" value="ECO:0000270"/>
    <property type="project" value="RGD"/>
</dbReference>
<dbReference type="GO" id="GO:0080184">
    <property type="term" value="P:response to phenylpropanoid"/>
    <property type="evidence" value="ECO:0000270"/>
    <property type="project" value="RGD"/>
</dbReference>
<dbReference type="GO" id="GO:0000302">
    <property type="term" value="P:response to reactive oxygen species"/>
    <property type="evidence" value="ECO:0000315"/>
    <property type="project" value="RGD"/>
</dbReference>
<dbReference type="GO" id="GO:0009636">
    <property type="term" value="P:response to toxic substance"/>
    <property type="evidence" value="ECO:0000270"/>
    <property type="project" value="RGD"/>
</dbReference>
<dbReference type="GO" id="GO:0009411">
    <property type="term" value="P:response to UV"/>
    <property type="evidence" value="ECO:0000270"/>
    <property type="project" value="RGD"/>
</dbReference>
<dbReference type="GO" id="GO:0033189">
    <property type="term" value="P:response to vitamin A"/>
    <property type="evidence" value="ECO:0000270"/>
    <property type="project" value="RGD"/>
</dbReference>
<dbReference type="GO" id="GO:0033197">
    <property type="term" value="P:response to vitamin E"/>
    <property type="evidence" value="ECO:0000270"/>
    <property type="project" value="RGD"/>
</dbReference>
<dbReference type="GO" id="GO:0009410">
    <property type="term" value="P:response to xenobiotic stimulus"/>
    <property type="evidence" value="ECO:0000270"/>
    <property type="project" value="RGD"/>
</dbReference>
<dbReference type="GO" id="GO:0006641">
    <property type="term" value="P:triglyceride metabolic process"/>
    <property type="evidence" value="ECO:0000266"/>
    <property type="project" value="RGD"/>
</dbReference>
<dbReference type="GO" id="GO:0001657">
    <property type="term" value="P:ureteric bud development"/>
    <property type="evidence" value="ECO:0000315"/>
    <property type="project" value="RGD"/>
</dbReference>
<dbReference type="GO" id="GO:0009650">
    <property type="term" value="P:UV protection"/>
    <property type="evidence" value="ECO:0000266"/>
    <property type="project" value="RGD"/>
</dbReference>
<dbReference type="CDD" id="cd08156">
    <property type="entry name" value="catalase_clade_3"/>
    <property type="match status" value="1"/>
</dbReference>
<dbReference type="FunFam" id="2.40.180.10:FF:000001">
    <property type="entry name" value="Catalase"/>
    <property type="match status" value="1"/>
</dbReference>
<dbReference type="Gene3D" id="2.40.180.10">
    <property type="entry name" value="Catalase core domain"/>
    <property type="match status" value="1"/>
</dbReference>
<dbReference type="InterPro" id="IPR018028">
    <property type="entry name" value="Catalase"/>
</dbReference>
<dbReference type="InterPro" id="IPR040333">
    <property type="entry name" value="Catalase_3"/>
</dbReference>
<dbReference type="InterPro" id="IPR024708">
    <property type="entry name" value="Catalase_AS"/>
</dbReference>
<dbReference type="InterPro" id="IPR024711">
    <property type="entry name" value="Catalase_clade1/3"/>
</dbReference>
<dbReference type="InterPro" id="IPR011614">
    <property type="entry name" value="Catalase_core"/>
</dbReference>
<dbReference type="InterPro" id="IPR002226">
    <property type="entry name" value="Catalase_haem_BS"/>
</dbReference>
<dbReference type="InterPro" id="IPR010582">
    <property type="entry name" value="Catalase_immune_responsive"/>
</dbReference>
<dbReference type="InterPro" id="IPR020835">
    <property type="entry name" value="Catalase_sf"/>
</dbReference>
<dbReference type="PANTHER" id="PTHR11465">
    <property type="entry name" value="CATALASE"/>
    <property type="match status" value="1"/>
</dbReference>
<dbReference type="PANTHER" id="PTHR11465:SF9">
    <property type="entry name" value="CATALASE"/>
    <property type="match status" value="1"/>
</dbReference>
<dbReference type="Pfam" id="PF00199">
    <property type="entry name" value="Catalase"/>
    <property type="match status" value="1"/>
</dbReference>
<dbReference type="Pfam" id="PF06628">
    <property type="entry name" value="Catalase-rel"/>
    <property type="match status" value="1"/>
</dbReference>
<dbReference type="PIRSF" id="PIRSF038928">
    <property type="entry name" value="Catalase_clade1-3"/>
    <property type="match status" value="1"/>
</dbReference>
<dbReference type="PRINTS" id="PR00067">
    <property type="entry name" value="CATALASE"/>
</dbReference>
<dbReference type="SMART" id="SM01060">
    <property type="entry name" value="Catalase"/>
    <property type="match status" value="1"/>
</dbReference>
<dbReference type="SUPFAM" id="SSF56634">
    <property type="entry name" value="Heme-dependent catalase-like"/>
    <property type="match status" value="1"/>
</dbReference>
<dbReference type="PROSITE" id="PS00437">
    <property type="entry name" value="CATALASE_1"/>
    <property type="match status" value="1"/>
</dbReference>
<dbReference type="PROSITE" id="PS00438">
    <property type="entry name" value="CATALASE_2"/>
    <property type="match status" value="1"/>
</dbReference>
<dbReference type="PROSITE" id="PS51402">
    <property type="entry name" value="CATALASE_3"/>
    <property type="match status" value="1"/>
</dbReference>
<organism>
    <name type="scientific">Rattus norvegicus</name>
    <name type="common">Rat</name>
    <dbReference type="NCBI Taxonomy" id="10116"/>
    <lineage>
        <taxon>Eukaryota</taxon>
        <taxon>Metazoa</taxon>
        <taxon>Chordata</taxon>
        <taxon>Craniata</taxon>
        <taxon>Vertebrata</taxon>
        <taxon>Euteleostomi</taxon>
        <taxon>Mammalia</taxon>
        <taxon>Eutheria</taxon>
        <taxon>Euarchontoglires</taxon>
        <taxon>Glires</taxon>
        <taxon>Rodentia</taxon>
        <taxon>Myomorpha</taxon>
        <taxon>Muroidea</taxon>
        <taxon>Muridae</taxon>
        <taxon>Murinae</taxon>
        <taxon>Rattus</taxon>
    </lineage>
</organism>
<reference key="1">
    <citation type="journal article" date="1986" name="Proc. Natl. Acad. Sci. U.S.A.">
        <title>Complete nucleotide sequence of cDNA and deduced amino acid sequence of rat liver catalase.</title>
        <authorList>
            <person name="Furuta S."/>
            <person name="Hayashi H."/>
            <person name="Hijikata M."/>
            <person name="Miyazawa S."/>
            <person name="Osumi T."/>
            <person name="Hashimoto T."/>
        </authorList>
    </citation>
    <scope>NUCLEOTIDE SEQUENCE [MRNA]</scope>
    <source>
        <tissue>Liver</tissue>
    </source>
</reference>
<reference key="2">
    <citation type="journal article" date="1989" name="Gene">
        <title>Isolation and characterization of the rat catalase-encoding gene.</title>
        <authorList>
            <person name="Nakashima H."/>
            <person name="Yamamoto M."/>
            <person name="Goto K."/>
            <person name="Osumi T."/>
            <person name="Hashimoto T."/>
            <person name="Endo H."/>
        </authorList>
    </citation>
    <scope>NUCLEOTIDE SEQUENCE [GENOMIC DNA]</scope>
    <source>
        <tissue>Liver</tissue>
    </source>
</reference>
<reference key="3">
    <citation type="journal article" date="2004" name="Genome Res.">
        <title>The status, quality, and expansion of the NIH full-length cDNA project: the Mammalian Gene Collection (MGC).</title>
        <authorList>
            <consortium name="The MGC Project Team"/>
        </authorList>
    </citation>
    <scope>NUCLEOTIDE SEQUENCE [LARGE SCALE MRNA]</scope>
    <source>
        <tissue>Kidney</tissue>
    </source>
</reference>
<reference key="4">
    <citation type="journal article" date="1984" name="Biochem. Biophys. Res. Commun.">
        <title>Molecular cloning of cDNA for rat liver catalase.</title>
        <authorList>
            <person name="Osumi T."/>
            <person name="Ozasa H."/>
            <person name="Miyazawa S."/>
            <person name="Hashimoto T."/>
        </authorList>
    </citation>
    <scope>NUCLEOTIDE SEQUENCE [MRNA] OF 399-527</scope>
</reference>
<reference key="5">
    <citation type="submission" date="2006-11" db="UniProtKB">
        <authorList>
            <person name="Lubec G."/>
            <person name="Afjehi-Sadat L."/>
        </authorList>
    </citation>
    <scope>PROTEIN SEQUENCE OF 481-492</scope>
    <scope>IDENTIFICATION BY MASS SPECTROMETRY</scope>
    <source>
        <strain>Sprague-Dawley</strain>
        <tissue>Spinal cord</tissue>
    </source>
</reference>
<reference key="6">
    <citation type="journal article" date="2012" name="Nat. Commun.">
        <title>Quantitative maps of protein phosphorylation sites across 14 different rat organs and tissues.</title>
        <authorList>
            <person name="Lundby A."/>
            <person name="Secher A."/>
            <person name="Lage K."/>
            <person name="Nordsborg N.B."/>
            <person name="Dmytriyev A."/>
            <person name="Lundby C."/>
            <person name="Olsen J.V."/>
        </authorList>
    </citation>
    <scope>PHOSPHORYLATION [LARGE SCALE ANALYSIS] AT SER-434 AND SER-517</scope>
    <scope>IDENTIFICATION BY MASS SPECTROMETRY [LARGE SCALE ANALYSIS]</scope>
</reference>
<reference key="7">
    <citation type="journal article" date="2017" name="Arch. Toxicol.">
        <title>Novel insights into renal D-amino acid oxidase accumulation: propiverine changes DAAO localization and peroxisomal size in vivo.</title>
        <authorList>
            <person name="Luks L."/>
            <person name="Sacchi S."/>
            <person name="Pollegioni L."/>
            <person name="Dietrich D.R."/>
        </authorList>
    </citation>
    <scope>SUBCELLULAR LOCATION</scope>
    <scope>TISSUE SPECIFICITY</scope>
</reference>
<name>CATA_RAT</name>